<dbReference type="EMBL" id="AE004091">
    <property type="protein sequence ID" value="AAG06946.1"/>
    <property type="molecule type" value="Genomic_DNA"/>
</dbReference>
<dbReference type="PIR" id="A83202">
    <property type="entry name" value="A83202"/>
</dbReference>
<dbReference type="RefSeq" id="NP_252248.1">
    <property type="nucleotide sequence ID" value="NC_002516.2"/>
</dbReference>
<dbReference type="RefSeq" id="WP_003110472.1">
    <property type="nucleotide sequence ID" value="NZ_QZGE01000001.1"/>
</dbReference>
<dbReference type="FunCoup" id="Q9HY59">
    <property type="interactions" value="81"/>
</dbReference>
<dbReference type="STRING" id="208964.PA3558"/>
<dbReference type="PaxDb" id="208964-PA3558"/>
<dbReference type="DNASU" id="879133"/>
<dbReference type="GeneID" id="879133"/>
<dbReference type="KEGG" id="pae:PA3558"/>
<dbReference type="PATRIC" id="fig|208964.12.peg.3723"/>
<dbReference type="PseudoCAP" id="PA3558"/>
<dbReference type="HOGENOM" id="CLU_131462_1_0_6"/>
<dbReference type="InParanoid" id="Q9HY59"/>
<dbReference type="BioCyc" id="PAER208964:G1FZ6-3626-MONOMER"/>
<dbReference type="UniPathway" id="UPA00030"/>
<dbReference type="Proteomes" id="UP000002438">
    <property type="component" value="Chromosome"/>
</dbReference>
<dbReference type="GO" id="GO:0005886">
    <property type="term" value="C:plasma membrane"/>
    <property type="evidence" value="ECO:0000318"/>
    <property type="project" value="GO_Central"/>
</dbReference>
<dbReference type="GO" id="GO:1901505">
    <property type="term" value="F:carbohydrate derivative transmembrane transporter activity"/>
    <property type="evidence" value="ECO:0007669"/>
    <property type="project" value="InterPro"/>
</dbReference>
<dbReference type="GO" id="GO:0022857">
    <property type="term" value="F:transmembrane transporter activity"/>
    <property type="evidence" value="ECO:0000318"/>
    <property type="project" value="GO_Central"/>
</dbReference>
<dbReference type="GO" id="GO:0009245">
    <property type="term" value="P:lipid A biosynthetic process"/>
    <property type="evidence" value="ECO:0007669"/>
    <property type="project" value="UniProtKB-UniRule"/>
</dbReference>
<dbReference type="GO" id="GO:0009103">
    <property type="term" value="P:lipopolysaccharide biosynthetic process"/>
    <property type="evidence" value="ECO:0007669"/>
    <property type="project" value="UniProtKB-UniRule"/>
</dbReference>
<dbReference type="GO" id="GO:0055085">
    <property type="term" value="P:transmembrane transport"/>
    <property type="evidence" value="ECO:0000318"/>
    <property type="project" value="GO_Central"/>
</dbReference>
<dbReference type="FunFam" id="1.10.3730.20:FF:000028">
    <property type="entry name" value="Probable 4-amino-4-deoxy-L-arabinose-phosphoundecaprenol flippase subunit ArnF"/>
    <property type="match status" value="1"/>
</dbReference>
<dbReference type="Gene3D" id="1.10.3730.20">
    <property type="match status" value="1"/>
</dbReference>
<dbReference type="HAMAP" id="MF_00538">
    <property type="entry name" value="Flippase_ArnF"/>
    <property type="match status" value="1"/>
</dbReference>
<dbReference type="InterPro" id="IPR022832">
    <property type="entry name" value="Flippase_ArnF"/>
</dbReference>
<dbReference type="InterPro" id="IPR000390">
    <property type="entry name" value="Small_drug/metabolite_transptr"/>
</dbReference>
<dbReference type="NCBIfam" id="NF002816">
    <property type="entry name" value="PRK02971.1-2"/>
    <property type="match status" value="1"/>
</dbReference>
<dbReference type="PANTHER" id="PTHR30561:SF9">
    <property type="entry name" value="4-AMINO-4-DEOXY-L-ARABINOSE-PHOSPHOUNDECAPRENOL FLIPPASE SUBUNIT ARNF-RELATED"/>
    <property type="match status" value="1"/>
</dbReference>
<dbReference type="PANTHER" id="PTHR30561">
    <property type="entry name" value="SMR FAMILY PROTON-DEPENDENT DRUG EFFLUX TRANSPORTER SUGE"/>
    <property type="match status" value="1"/>
</dbReference>
<dbReference type="SUPFAM" id="SSF103481">
    <property type="entry name" value="Multidrug resistance efflux transporter EmrE"/>
    <property type="match status" value="1"/>
</dbReference>
<gene>
    <name evidence="1" type="primary">arnF</name>
    <name type="ordered locus">PA3558</name>
</gene>
<sequence length="137" mass="14273">MNALRGWLAALGSVLLASAAQLGMRWGMSRLPLPEAWAGQTPERAALLAVALAVAAYAASLLCWLAALRHLPLGRAYSLLSASYALVYLLAASLPAFDETFSTSKTLGVGLVVLGVLTVNARRTAAAPAHHPSRKAP</sequence>
<reference key="1">
    <citation type="journal article" date="2000" name="Nature">
        <title>Complete genome sequence of Pseudomonas aeruginosa PAO1, an opportunistic pathogen.</title>
        <authorList>
            <person name="Stover C.K."/>
            <person name="Pham X.-Q.T."/>
            <person name="Erwin A.L."/>
            <person name="Mizoguchi S.D."/>
            <person name="Warrener P."/>
            <person name="Hickey M.J."/>
            <person name="Brinkman F.S.L."/>
            <person name="Hufnagle W.O."/>
            <person name="Kowalik D.J."/>
            <person name="Lagrou M."/>
            <person name="Garber R.L."/>
            <person name="Goltry L."/>
            <person name="Tolentino E."/>
            <person name="Westbrock-Wadman S."/>
            <person name="Yuan Y."/>
            <person name="Brody L.L."/>
            <person name="Coulter S.N."/>
            <person name="Folger K.R."/>
            <person name="Kas A."/>
            <person name="Larbig K."/>
            <person name="Lim R.M."/>
            <person name="Smith K.A."/>
            <person name="Spencer D.H."/>
            <person name="Wong G.K.-S."/>
            <person name="Wu Z."/>
            <person name="Paulsen I.T."/>
            <person name="Reizer J."/>
            <person name="Saier M.H. Jr."/>
            <person name="Hancock R.E.W."/>
            <person name="Lory S."/>
            <person name="Olson M.V."/>
        </authorList>
    </citation>
    <scope>NUCLEOTIDE SEQUENCE [LARGE SCALE GENOMIC DNA]</scope>
    <source>
        <strain>ATCC 15692 / DSM 22644 / CIP 104116 / JCM 14847 / LMG 12228 / 1C / PRS 101 / PAO1</strain>
    </source>
</reference>
<accession>Q9HY59</accession>
<protein>
    <recommendedName>
        <fullName evidence="1">Probable 4-amino-4-deoxy-L-arabinose-phosphoundecaprenol flippase subunit ArnF</fullName>
        <shortName evidence="1">L-Ara4N-phosphoundecaprenol flippase subunit ArnF</shortName>
    </recommendedName>
    <alternativeName>
        <fullName evidence="1">Undecaprenyl phosphate-aminoarabinose flippase subunit ArnF</fullName>
    </alternativeName>
</protein>
<feature type="chain" id="PRO_0000218159" description="Probable 4-amino-4-deoxy-L-arabinose-phosphoundecaprenol flippase subunit ArnF">
    <location>
        <begin position="1"/>
        <end position="137"/>
    </location>
</feature>
<feature type="topological domain" description="Cytoplasmic" evidence="1">
    <location>
        <begin position="1"/>
        <end position="3"/>
    </location>
</feature>
<feature type="transmembrane region" description="Helical" evidence="1">
    <location>
        <begin position="4"/>
        <end position="24"/>
    </location>
</feature>
<feature type="topological domain" description="Periplasmic" evidence="1">
    <location>
        <begin position="25"/>
        <end position="44"/>
    </location>
</feature>
<feature type="transmembrane region" description="Helical" evidence="1">
    <location>
        <begin position="45"/>
        <end position="65"/>
    </location>
</feature>
<feature type="topological domain" description="Cytoplasmic" evidence="1">
    <location>
        <begin position="66"/>
        <end position="76"/>
    </location>
</feature>
<feature type="transmembrane region" description="Helical" evidence="1">
    <location>
        <begin position="77"/>
        <end position="97"/>
    </location>
</feature>
<feature type="topological domain" description="Periplasmic" evidence="1">
    <location>
        <begin position="98"/>
        <end position="100"/>
    </location>
</feature>
<feature type="transmembrane region" description="Helical" evidence="1">
    <location>
        <begin position="101"/>
        <end position="121"/>
    </location>
</feature>
<feature type="topological domain" description="Cytoplasmic" evidence="1">
    <location>
        <begin position="122"/>
        <end position="137"/>
    </location>
</feature>
<proteinExistence type="inferred from homology"/>
<evidence type="ECO:0000255" key="1">
    <source>
        <dbReference type="HAMAP-Rule" id="MF_00538"/>
    </source>
</evidence>
<comment type="function">
    <text evidence="1">Translocates 4-amino-4-deoxy-L-arabinose-phosphoundecaprenol (alpha-L-Ara4N-phosphoundecaprenol) from the cytoplasmic to the periplasmic side of the inner membrane.</text>
</comment>
<comment type="pathway">
    <text evidence="1">Bacterial outer membrane biogenesis; lipopolysaccharide biosynthesis.</text>
</comment>
<comment type="subunit">
    <text evidence="1">Heterodimer of ArnE and ArnF.</text>
</comment>
<comment type="subcellular location">
    <subcellularLocation>
        <location evidence="1">Cell inner membrane</location>
        <topology evidence="1">Multi-pass membrane protein</topology>
    </subcellularLocation>
</comment>
<comment type="similarity">
    <text evidence="1">Belongs to the ArnF family.</text>
</comment>
<organism>
    <name type="scientific">Pseudomonas aeruginosa (strain ATCC 15692 / DSM 22644 / CIP 104116 / JCM 14847 / LMG 12228 / 1C / PRS 101 / PAO1)</name>
    <dbReference type="NCBI Taxonomy" id="208964"/>
    <lineage>
        <taxon>Bacteria</taxon>
        <taxon>Pseudomonadati</taxon>
        <taxon>Pseudomonadota</taxon>
        <taxon>Gammaproteobacteria</taxon>
        <taxon>Pseudomonadales</taxon>
        <taxon>Pseudomonadaceae</taxon>
        <taxon>Pseudomonas</taxon>
    </lineage>
</organism>
<keyword id="KW-0997">Cell inner membrane</keyword>
<keyword id="KW-1003">Cell membrane</keyword>
<keyword id="KW-0441">Lipid A biosynthesis</keyword>
<keyword id="KW-0444">Lipid biosynthesis</keyword>
<keyword id="KW-0443">Lipid metabolism</keyword>
<keyword id="KW-0448">Lipopolysaccharide biosynthesis</keyword>
<keyword id="KW-0472">Membrane</keyword>
<keyword id="KW-1185">Reference proteome</keyword>
<keyword id="KW-0812">Transmembrane</keyword>
<keyword id="KW-1133">Transmembrane helix</keyword>
<keyword id="KW-0813">Transport</keyword>
<name>ARNF_PSEAE</name>